<accession>Q41046</accession>
<organism>
    <name type="scientific">Pinus sylvestris</name>
    <name type="common">Scotch pine</name>
    <dbReference type="NCBI Taxonomy" id="3349"/>
    <lineage>
        <taxon>Eukaryota</taxon>
        <taxon>Viridiplantae</taxon>
        <taxon>Streptophyta</taxon>
        <taxon>Embryophyta</taxon>
        <taxon>Tracheophyta</taxon>
        <taxon>Spermatophyta</taxon>
        <taxon>Pinopsida</taxon>
        <taxon>Pinidae</taxon>
        <taxon>Conifers I</taxon>
        <taxon>Pinales</taxon>
        <taxon>Pinaceae</taxon>
        <taxon>Pinus</taxon>
        <taxon>Pinus subgen. Pinus</taxon>
    </lineage>
</organism>
<protein>
    <recommendedName>
        <fullName>Phytochrome</fullName>
    </recommendedName>
</protein>
<reference key="1">
    <citation type="journal article" date="1999" name="Plant Mol. Biol.">
        <title>Phytochrome types in Picea and Pinus. Expression patterns of PHYA-Related types.</title>
        <authorList>
            <person name="Clapham D.H."/>
            <person name="Kolukisaoglu H.U."/>
            <person name="Larsson C.T."/>
            <person name="Qamaruddin M."/>
            <person name="Ekberg I."/>
            <person name="Wiegmann-Eirund C."/>
            <person name="Schneider-Poetsch H.A."/>
            <person name="von Arnold S."/>
        </authorList>
    </citation>
    <scope>NUCLEOTIDE SEQUENCE [MRNA]</scope>
    <source>
        <strain>PSA 5.1</strain>
    </source>
</reference>
<sequence>MASNSRHTQSQSTGSNNRRSSTNTNTTTNKATAMAQYNSDARLLQVFEQSGESGKSFDYTRSIQVHNRAVPEQQITAYLSRIQRGGRIQPFGCVLAVEETTFRIIAYSENEEMLDLGAQSVPSMEKPQQDVLTIGTDVRTLFTAASAHSLEKAAVAQEISLMNPIWVHCKNSRKPFYAIVHRIDVGMVIDLEPLRTGDAFMSAAGAVQSQKLAVRAISRLQSLPCGDVGLLCDTVVENVRELTGYDRVMVYKFHEDEHGEVVAEIRRSDLEPYLGLHYPATDIPQASRFLFMQNRVRMICDCMATPVKVIQSEELMQPLCLVGSTPSAPHGCHAQYMANMGSIRSLLMAVIINGNDDEGGGSGRNSMKLWGLVVCHHTSPRAVPFPLRYACEFLMQALGLQLNMELQLAAQLTEKHILRTQTLLCDMLLRDAPMGIVTQSPSIKDLVKCDGAALYYGGMCWMLGVTPTEAQIKDIADWLLEHHGDSTGLSTDSLADAGYPGAASLGDAVCGMASARITSKDFLFWFRSHTAKEMKWGGAKHHPDDKDDARRMHPRSSFKAFLEVVKRRSLPWDNVEIDAIHSLQLILRCSFRDIDDSGTKTMVHSRLNYLRLQGIDELSSVASEMVRLIETATAPILAVDYNGLVNGWNAKVAELTGLPVGEAMGMSLVQDLVFEQSVERVEKMLHNALRGEEEKNVEMMLKTFGPQKEKEAVILVVNACSSRDFTDNIVGVCFVGQDVTSQKVVMDKFIRIQGDYRSIVQSPNPLIPPIFASDEYACCSEWNAAMEKVTGWTHDEVIGKMLVGEIFGGCCRLKGQDAVTKFTIVLHQCNHGQEIEKFPFAFFDKQGKYVEALLTANKRTDADGRITGSFCFFRIASSELQHALEVQRQQEKKCFARLKELAYIRQEIKNPLYGMMFTRKLLEETDLSDDQKQFVETSAVCERQMQKVMDDMDLESLEDGYMELDTAEFILGTVIDAVVSQGMIVLREKGLQLIREIPGEVKTMRLYGDEVKIQQILADFLLNVLRFTPSPEGWVAIKVFPTLKQLGGGLHVVHLEFRITHPGLGLPAELVQDLFDRSQWATQEGVGLSMCRKLLKLMNGDVRYIRESGICYFLVNVEFPMAQREDAASIK</sequence>
<comment type="function">
    <text>Regulatory photoreceptor which exists in two forms that are reversibly interconvertible by light: the Pr form that absorbs maximally in the red region of the spectrum and the Pfr form that absorbs maximally in the far-red region. Photoconversion of Pr to Pfr induces an array of morphogenic responses, whereas reconversion of Pfr to Pr cancels the induction of those responses. Pfr controls the expression of a number of nuclear genes including those encoding the small subunit of ribulose-bisphosphate carboxylase, chlorophyll A/B binding protein, protochlorophyllide reductase, rRNA, etc. It also controls the expression of its own gene(s) in a negative feedback fashion.</text>
</comment>
<comment type="subunit">
    <text evidence="1">Homodimer.</text>
</comment>
<comment type="PTM">
    <text evidence="1">Contains one covalently linked phytochromobilin chromophore.</text>
</comment>
<comment type="similarity">
    <text evidence="5">Belongs to the phytochrome family.</text>
</comment>
<dbReference type="EMBL" id="X96738">
    <property type="protein sequence ID" value="CAA65510.1"/>
    <property type="molecule type" value="mRNA"/>
</dbReference>
<dbReference type="PIR" id="T09701">
    <property type="entry name" value="T09701"/>
</dbReference>
<dbReference type="SMR" id="Q41046"/>
<dbReference type="GO" id="GO:0000155">
    <property type="term" value="F:phosphorelay sensor kinase activity"/>
    <property type="evidence" value="ECO:0007669"/>
    <property type="project" value="InterPro"/>
</dbReference>
<dbReference type="GO" id="GO:0009881">
    <property type="term" value="F:photoreceptor activity"/>
    <property type="evidence" value="ECO:0007669"/>
    <property type="project" value="UniProtKB-KW"/>
</dbReference>
<dbReference type="GO" id="GO:0042803">
    <property type="term" value="F:protein homodimerization activity"/>
    <property type="evidence" value="ECO:0007669"/>
    <property type="project" value="InterPro"/>
</dbReference>
<dbReference type="GO" id="GO:0009584">
    <property type="term" value="P:detection of visible light"/>
    <property type="evidence" value="ECO:0007669"/>
    <property type="project" value="InterPro"/>
</dbReference>
<dbReference type="GO" id="GO:0009585">
    <property type="term" value="P:red, far-red light phototransduction"/>
    <property type="evidence" value="ECO:0007669"/>
    <property type="project" value="InterPro"/>
</dbReference>
<dbReference type="GO" id="GO:0006355">
    <property type="term" value="P:regulation of DNA-templated transcription"/>
    <property type="evidence" value="ECO:0007669"/>
    <property type="project" value="InterPro"/>
</dbReference>
<dbReference type="CDD" id="cd16932">
    <property type="entry name" value="HATPase_Phy-like"/>
    <property type="match status" value="1"/>
</dbReference>
<dbReference type="CDD" id="cd00082">
    <property type="entry name" value="HisKA"/>
    <property type="match status" value="1"/>
</dbReference>
<dbReference type="CDD" id="cd00130">
    <property type="entry name" value="PAS"/>
    <property type="match status" value="2"/>
</dbReference>
<dbReference type="FunFam" id="3.30.450.20:FF:000034">
    <property type="entry name" value="Phytochrome"/>
    <property type="match status" value="1"/>
</dbReference>
<dbReference type="FunFam" id="3.30.450.20:FF:000039">
    <property type="entry name" value="Phytochrome"/>
    <property type="match status" value="1"/>
</dbReference>
<dbReference type="FunFam" id="3.30.450.270:FF:000001">
    <property type="entry name" value="Phytochrome"/>
    <property type="match status" value="1"/>
</dbReference>
<dbReference type="FunFam" id="3.30.565.10:FF:000044">
    <property type="entry name" value="Phytochrome"/>
    <property type="match status" value="1"/>
</dbReference>
<dbReference type="Gene3D" id="3.30.450.270">
    <property type="match status" value="1"/>
</dbReference>
<dbReference type="Gene3D" id="3.30.450.40">
    <property type="match status" value="1"/>
</dbReference>
<dbReference type="Gene3D" id="3.30.565.10">
    <property type="entry name" value="Histidine kinase-like ATPase, C-terminal domain"/>
    <property type="match status" value="1"/>
</dbReference>
<dbReference type="Gene3D" id="3.30.450.20">
    <property type="entry name" value="PAS domain"/>
    <property type="match status" value="3"/>
</dbReference>
<dbReference type="InterPro" id="IPR003018">
    <property type="entry name" value="GAF"/>
</dbReference>
<dbReference type="InterPro" id="IPR029016">
    <property type="entry name" value="GAF-like_dom_sf"/>
</dbReference>
<dbReference type="InterPro" id="IPR036890">
    <property type="entry name" value="HATPase_C_sf"/>
</dbReference>
<dbReference type="InterPro" id="IPR005467">
    <property type="entry name" value="His_kinase_dom"/>
</dbReference>
<dbReference type="InterPro" id="IPR003661">
    <property type="entry name" value="HisK_dim/P_dom"/>
</dbReference>
<dbReference type="InterPro" id="IPR000014">
    <property type="entry name" value="PAS"/>
</dbReference>
<dbReference type="InterPro" id="IPR035965">
    <property type="entry name" value="PAS-like_dom_sf"/>
</dbReference>
<dbReference type="InterPro" id="IPR013654">
    <property type="entry name" value="PAS_2"/>
</dbReference>
<dbReference type="InterPro" id="IPR013767">
    <property type="entry name" value="PAS_fold"/>
</dbReference>
<dbReference type="InterPro" id="IPR044767">
    <property type="entry name" value="Phy_HATPase-like"/>
</dbReference>
<dbReference type="InterPro" id="IPR016132">
    <property type="entry name" value="Phyto_chromo_attachment"/>
</dbReference>
<dbReference type="InterPro" id="IPR013516">
    <property type="entry name" value="Phyto_chromo_BS"/>
</dbReference>
<dbReference type="InterPro" id="IPR001294">
    <property type="entry name" value="Phytochrome"/>
</dbReference>
<dbReference type="InterPro" id="IPR012129">
    <property type="entry name" value="Phytochrome_A-E"/>
</dbReference>
<dbReference type="InterPro" id="IPR013515">
    <property type="entry name" value="Phytochrome_cen-reg"/>
</dbReference>
<dbReference type="InterPro" id="IPR043150">
    <property type="entry name" value="Phytochrome_PHY_sf"/>
</dbReference>
<dbReference type="NCBIfam" id="TIGR00229">
    <property type="entry name" value="sensory_box"/>
    <property type="match status" value="1"/>
</dbReference>
<dbReference type="PANTHER" id="PTHR47876">
    <property type="entry name" value="OS08G0260000 PROTEIN"/>
    <property type="match status" value="1"/>
</dbReference>
<dbReference type="PANTHER" id="PTHR47876:SF3">
    <property type="entry name" value="PHYTOCHROME 1"/>
    <property type="match status" value="1"/>
</dbReference>
<dbReference type="Pfam" id="PF01590">
    <property type="entry name" value="GAF"/>
    <property type="match status" value="1"/>
</dbReference>
<dbReference type="Pfam" id="PF02518">
    <property type="entry name" value="HATPase_c"/>
    <property type="match status" value="1"/>
</dbReference>
<dbReference type="Pfam" id="PF00512">
    <property type="entry name" value="HisKA"/>
    <property type="match status" value="1"/>
</dbReference>
<dbReference type="Pfam" id="PF00989">
    <property type="entry name" value="PAS"/>
    <property type="match status" value="2"/>
</dbReference>
<dbReference type="Pfam" id="PF08446">
    <property type="entry name" value="PAS_2"/>
    <property type="match status" value="1"/>
</dbReference>
<dbReference type="Pfam" id="PF00360">
    <property type="entry name" value="PHY"/>
    <property type="match status" value="1"/>
</dbReference>
<dbReference type="PIRSF" id="PIRSF000084">
    <property type="entry name" value="Phytochrome"/>
    <property type="match status" value="1"/>
</dbReference>
<dbReference type="PRINTS" id="PR01033">
    <property type="entry name" value="PHYTOCHROME"/>
</dbReference>
<dbReference type="SMART" id="SM00065">
    <property type="entry name" value="GAF"/>
    <property type="match status" value="1"/>
</dbReference>
<dbReference type="SMART" id="SM00387">
    <property type="entry name" value="HATPase_c"/>
    <property type="match status" value="1"/>
</dbReference>
<dbReference type="SMART" id="SM00388">
    <property type="entry name" value="HisKA"/>
    <property type="match status" value="1"/>
</dbReference>
<dbReference type="SMART" id="SM00091">
    <property type="entry name" value="PAS"/>
    <property type="match status" value="2"/>
</dbReference>
<dbReference type="SUPFAM" id="SSF55874">
    <property type="entry name" value="ATPase domain of HSP90 chaperone/DNA topoisomerase II/histidine kinase"/>
    <property type="match status" value="1"/>
</dbReference>
<dbReference type="SUPFAM" id="SSF55781">
    <property type="entry name" value="GAF domain-like"/>
    <property type="match status" value="2"/>
</dbReference>
<dbReference type="SUPFAM" id="SSF55785">
    <property type="entry name" value="PYP-like sensor domain (PAS domain)"/>
    <property type="match status" value="3"/>
</dbReference>
<dbReference type="PROSITE" id="PS50109">
    <property type="entry name" value="HIS_KIN"/>
    <property type="match status" value="1"/>
</dbReference>
<dbReference type="PROSITE" id="PS50112">
    <property type="entry name" value="PAS"/>
    <property type="match status" value="2"/>
</dbReference>
<dbReference type="PROSITE" id="PS00245">
    <property type="entry name" value="PHYTOCHROME_1"/>
    <property type="match status" value="1"/>
</dbReference>
<dbReference type="PROSITE" id="PS50046">
    <property type="entry name" value="PHYTOCHROME_2"/>
    <property type="match status" value="1"/>
</dbReference>
<feature type="chain" id="PRO_0000171985" description="Phytochrome">
    <location>
        <begin position="1"/>
        <end position="1131"/>
    </location>
</feature>
<feature type="domain" description="GAF">
    <location>
        <begin position="227"/>
        <end position="406"/>
    </location>
</feature>
<feature type="domain" description="PAS 1" evidence="3">
    <location>
        <begin position="621"/>
        <end position="692"/>
    </location>
</feature>
<feature type="domain" description="PAS 2" evidence="3">
    <location>
        <begin position="755"/>
        <end position="826"/>
    </location>
</feature>
<feature type="domain" description="Histidine kinase" evidence="2">
    <location>
        <begin position="903"/>
        <end position="1123"/>
    </location>
</feature>
<feature type="region of interest" description="Disordered" evidence="4">
    <location>
        <begin position="1"/>
        <end position="30"/>
    </location>
</feature>
<feature type="compositionally biased region" description="Low complexity" evidence="4">
    <location>
        <begin position="9"/>
        <end position="29"/>
    </location>
</feature>
<feature type="binding site" description="covalent" evidence="1">
    <location>
        <position position="332"/>
    </location>
    <ligand>
        <name>phytochromobilin</name>
        <dbReference type="ChEBI" id="CHEBI:189064"/>
    </ligand>
</feature>
<evidence type="ECO:0000250" key="1"/>
<evidence type="ECO:0000255" key="2">
    <source>
        <dbReference type="PROSITE-ProRule" id="PRU00107"/>
    </source>
</evidence>
<evidence type="ECO:0000255" key="3">
    <source>
        <dbReference type="PROSITE-ProRule" id="PRU00140"/>
    </source>
</evidence>
<evidence type="ECO:0000256" key="4">
    <source>
        <dbReference type="SAM" id="MobiDB-lite"/>
    </source>
</evidence>
<evidence type="ECO:0000305" key="5"/>
<keyword id="KW-0157">Chromophore</keyword>
<keyword id="KW-0600">Photoreceptor protein</keyword>
<keyword id="KW-0675">Receptor</keyword>
<keyword id="KW-0677">Repeat</keyword>
<keyword id="KW-0716">Sensory transduction</keyword>
<keyword id="KW-0804">Transcription</keyword>
<keyword id="KW-0805">Transcription regulation</keyword>
<name>PHY_PINSY</name>
<proteinExistence type="evidence at transcript level"/>